<feature type="initiator methionine" description="Removed" evidence="13 15 17">
    <location>
        <position position="1"/>
    </location>
</feature>
<feature type="chain" id="PRO_0000341590" description="Zinc finger protein AEBP2">
    <location>
        <begin position="2"/>
        <end position="517"/>
    </location>
</feature>
<feature type="zinc finger region" description="C2H2-type 1" evidence="1">
    <location>
        <begin position="261"/>
        <end position="286"/>
    </location>
</feature>
<feature type="zinc finger region" description="C2H2-type 2; degenerate" evidence="1">
    <location>
        <begin position="300"/>
        <end position="322"/>
    </location>
</feature>
<feature type="zinc finger region" description="C2H2-type 3" evidence="1">
    <location>
        <begin position="328"/>
        <end position="352"/>
    </location>
</feature>
<feature type="region of interest" description="Disordered" evidence="2">
    <location>
        <begin position="1"/>
        <end position="229"/>
    </location>
</feature>
<feature type="region of interest" description="Interaction with RBBP4">
    <location>
        <begin position="209"/>
        <end position="294"/>
    </location>
</feature>
<feature type="region of interest" description="Disordered" evidence="2">
    <location>
        <begin position="352"/>
        <end position="394"/>
    </location>
</feature>
<feature type="region of interest" description="Interaction with SUZ12" evidence="5">
    <location>
        <begin position="407"/>
        <end position="478"/>
    </location>
</feature>
<feature type="region of interest" description="Important for nucleosome binding activity of the PRC2 complex" evidence="5">
    <location>
        <begin position="495"/>
        <end position="517"/>
    </location>
</feature>
<feature type="compositionally biased region" description="Acidic residues" evidence="2">
    <location>
        <begin position="36"/>
        <end position="51"/>
    </location>
</feature>
<feature type="compositionally biased region" description="Gly residues" evidence="2">
    <location>
        <begin position="61"/>
        <end position="78"/>
    </location>
</feature>
<feature type="compositionally biased region" description="Acidic residues" evidence="2">
    <location>
        <begin position="94"/>
        <end position="121"/>
    </location>
</feature>
<feature type="compositionally biased region" description="Low complexity" evidence="2">
    <location>
        <begin position="122"/>
        <end position="150"/>
    </location>
</feature>
<feature type="compositionally biased region" description="Basic and acidic residues" evidence="2">
    <location>
        <begin position="152"/>
        <end position="163"/>
    </location>
</feature>
<feature type="compositionally biased region" description="Gly residues" evidence="2">
    <location>
        <begin position="166"/>
        <end position="175"/>
    </location>
</feature>
<feature type="compositionally biased region" description="Gly residues" evidence="2">
    <location>
        <begin position="185"/>
        <end position="196"/>
    </location>
</feature>
<feature type="compositionally biased region" description="Polar residues" evidence="2">
    <location>
        <begin position="352"/>
        <end position="365"/>
    </location>
</feature>
<feature type="compositionally biased region" description="Basic residues" evidence="2">
    <location>
        <begin position="377"/>
        <end position="392"/>
    </location>
</feature>
<feature type="modified residue" description="N-acetylalanine" evidence="13 15 17">
    <location>
        <position position="2"/>
    </location>
</feature>
<feature type="modified residue" description="Phosphoserine" evidence="11 15">
    <location>
        <position position="18"/>
    </location>
</feature>
<feature type="modified residue" description="Phosphoserine" evidence="11 15">
    <location>
        <position position="24"/>
    </location>
</feature>
<feature type="modified residue" description="Phosphoserine" evidence="18">
    <location>
        <position position="141"/>
    </location>
</feature>
<feature type="modified residue" description="Phosphoserine" evidence="12 14 16 18">
    <location>
        <position position="206"/>
    </location>
</feature>
<feature type="modified residue" description="Phosphoserine" evidence="12">
    <location>
        <position position="210"/>
    </location>
</feature>
<feature type="modified residue" description="Phosphoserine" evidence="12">
    <location>
        <position position="211"/>
    </location>
</feature>
<feature type="modified residue" description="Phosphoserine" evidence="15 16">
    <location>
        <position position="390"/>
    </location>
</feature>
<feature type="splice variant" id="VSP_034357" description="In isoform 3." evidence="7">
    <location>
        <begin position="1"/>
        <end position="216"/>
    </location>
</feature>
<feature type="splice variant" id="VSP_034358" description="In isoform 3." evidence="7">
    <original>SRMDSED</original>
    <variation>MYTRRYS</variation>
    <location>
        <begin position="217"/>
        <end position="223"/>
    </location>
</feature>
<feature type="splice variant" id="VSP_034359" description="In isoform 2." evidence="8">
    <location>
        <begin position="504"/>
        <end position="517"/>
    </location>
</feature>
<feature type="strand" evidence="21">
    <location>
        <begin position="271"/>
        <end position="274"/>
    </location>
</feature>
<feature type="helix" evidence="21">
    <location>
        <begin position="275"/>
        <end position="285"/>
    </location>
</feature>
<feature type="helix" evidence="21">
    <location>
        <begin position="288"/>
        <end position="290"/>
    </location>
</feature>
<feature type="strand" evidence="21">
    <location>
        <begin position="292"/>
        <end position="294"/>
    </location>
</feature>
<feature type="helix" evidence="21">
    <location>
        <begin position="312"/>
        <end position="323"/>
    </location>
</feature>
<feature type="strand" evidence="20">
    <location>
        <begin position="326"/>
        <end position="329"/>
    </location>
</feature>
<feature type="strand" evidence="20">
    <location>
        <begin position="338"/>
        <end position="341"/>
    </location>
</feature>
<feature type="helix" evidence="20">
    <location>
        <begin position="342"/>
        <end position="352"/>
    </location>
</feature>
<feature type="helix" evidence="19">
    <location>
        <begin position="415"/>
        <end position="420"/>
    </location>
</feature>
<feature type="turn" evidence="19">
    <location>
        <begin position="421"/>
        <end position="426"/>
    </location>
</feature>
<feature type="strand" evidence="19">
    <location>
        <begin position="427"/>
        <end position="443"/>
    </location>
</feature>
<feature type="strand" evidence="19">
    <location>
        <begin position="445"/>
        <end position="453"/>
    </location>
</feature>
<feature type="strand" evidence="19">
    <location>
        <begin position="455"/>
        <end position="457"/>
    </location>
</feature>
<feature type="strand" evidence="19">
    <location>
        <begin position="460"/>
        <end position="463"/>
    </location>
</feature>
<feature type="helix" evidence="19">
    <location>
        <begin position="464"/>
        <end position="467"/>
    </location>
</feature>
<feature type="strand" evidence="19">
    <location>
        <begin position="471"/>
        <end position="476"/>
    </location>
</feature>
<feature type="helix" evidence="19">
    <location>
        <begin position="477"/>
        <end position="479"/>
    </location>
</feature>
<feature type="helix" evidence="19">
    <location>
        <begin position="482"/>
        <end position="485"/>
    </location>
</feature>
<feature type="helix" evidence="19">
    <location>
        <begin position="486"/>
        <end position="488"/>
    </location>
</feature>
<feature type="helix" evidence="21">
    <location>
        <begin position="490"/>
        <end position="492"/>
    </location>
</feature>
<feature type="strand" evidence="19">
    <location>
        <begin position="496"/>
        <end position="499"/>
    </location>
</feature>
<evidence type="ECO:0000255" key="1">
    <source>
        <dbReference type="PROSITE-ProRule" id="PRU00042"/>
    </source>
</evidence>
<evidence type="ECO:0000256" key="2">
    <source>
        <dbReference type="SAM" id="MobiDB-lite"/>
    </source>
</evidence>
<evidence type="ECO:0000269" key="3">
    <source>
    </source>
</evidence>
<evidence type="ECO:0000269" key="4">
    <source>
    </source>
</evidence>
<evidence type="ECO:0000269" key="5">
    <source>
    </source>
</evidence>
<evidence type="ECO:0000269" key="6">
    <source>
    </source>
</evidence>
<evidence type="ECO:0000303" key="7">
    <source>
    </source>
</evidence>
<evidence type="ECO:0000303" key="8">
    <source>
    </source>
</evidence>
<evidence type="ECO:0000305" key="9"/>
<evidence type="ECO:0007744" key="10">
    <source>
        <dbReference type="PDB" id="5WAI"/>
    </source>
</evidence>
<evidence type="ECO:0007744" key="11">
    <source>
    </source>
</evidence>
<evidence type="ECO:0007744" key="12">
    <source>
    </source>
</evidence>
<evidence type="ECO:0007744" key="13">
    <source>
    </source>
</evidence>
<evidence type="ECO:0007744" key="14">
    <source>
    </source>
</evidence>
<evidence type="ECO:0007744" key="15">
    <source>
    </source>
</evidence>
<evidence type="ECO:0007744" key="16">
    <source>
    </source>
</evidence>
<evidence type="ECO:0007744" key="17">
    <source>
    </source>
</evidence>
<evidence type="ECO:0007744" key="18">
    <source>
    </source>
</evidence>
<evidence type="ECO:0007829" key="19">
    <source>
        <dbReference type="PDB" id="5WAI"/>
    </source>
</evidence>
<evidence type="ECO:0007829" key="20">
    <source>
        <dbReference type="PDB" id="5Y0U"/>
    </source>
</evidence>
<evidence type="ECO:0007829" key="21">
    <source>
        <dbReference type="PDB" id="6WKR"/>
    </source>
</evidence>
<keyword id="KW-0002">3D-structure</keyword>
<keyword id="KW-0007">Acetylation</keyword>
<keyword id="KW-0025">Alternative splicing</keyword>
<keyword id="KW-0156">Chromatin regulator</keyword>
<keyword id="KW-0238">DNA-binding</keyword>
<keyword id="KW-0479">Metal-binding</keyword>
<keyword id="KW-0539">Nucleus</keyword>
<keyword id="KW-0597">Phosphoprotein</keyword>
<keyword id="KW-1267">Proteomics identification</keyword>
<keyword id="KW-1185">Reference proteome</keyword>
<keyword id="KW-0677">Repeat</keyword>
<keyword id="KW-0678">Repressor</keyword>
<keyword id="KW-0804">Transcription</keyword>
<keyword id="KW-0805">Transcription regulation</keyword>
<keyword id="KW-0862">Zinc</keyword>
<keyword id="KW-0863">Zinc-finger</keyword>
<name>AEBP2_HUMAN</name>
<accession>Q6ZN18</accession>
<accession>Q59FS5</accession>
<accession>Q6ZN62</accession>
<accession>Q96BG3</accession>
<sequence length="517" mass="54467">MAAAITDMADLEELSRLSPLPPGSPGSAARGRAEPPEEEEEEEEEEEEAEAEAVAALLLNGGSGGGGGGGGGGVGGGEAETMSEPSPESASQAGEDEDEEEDDEEEEDESSSSGGGEEESSAESLVGSSGGSSSDETRSLSPGAASSSSGDGDGKEGLEEPKGPRGSQGGGGGGSSSSSVVSSGGDEGYGTGGGGSSATSGGRRGSLEMSSDGEPLSRMDSEDSISSTIMDVDSTISSGRSTPAMMNGQGSTTSSSKNIAYNCCWDQCQACFNSSPDLADHIRSIHVDGQRGGVFVCLWKGCKVYNTPSTSQSWLQRHMLTHSGDKPFKCVVGGCNASFASQGGLARHVPTHFSQQNSSKVSSQPKAKEESPSKAGMNKRRKLKNKRRRSLPRPHDFFDAQTLDAIRHRAICFNLSAHIESLGKGHSVVFHSTVIAKRKEDSGKIKLLLHWMPEDILPDVWVNESERHQLKTKVVHLSKLPKDTALLLDPNIYRTMPQKRLKRTLIRKVFNLYLSKQ</sequence>
<proteinExistence type="evidence at protein level"/>
<organism>
    <name type="scientific">Homo sapiens</name>
    <name type="common">Human</name>
    <dbReference type="NCBI Taxonomy" id="9606"/>
    <lineage>
        <taxon>Eukaryota</taxon>
        <taxon>Metazoa</taxon>
        <taxon>Chordata</taxon>
        <taxon>Craniata</taxon>
        <taxon>Vertebrata</taxon>
        <taxon>Euteleostomi</taxon>
        <taxon>Mammalia</taxon>
        <taxon>Eutheria</taxon>
        <taxon>Euarchontoglires</taxon>
        <taxon>Primates</taxon>
        <taxon>Haplorrhini</taxon>
        <taxon>Catarrhini</taxon>
        <taxon>Hominidae</taxon>
        <taxon>Homo</taxon>
    </lineage>
</organism>
<gene>
    <name type="primary">AEBP2</name>
</gene>
<dbReference type="EMBL" id="AK131361">
    <property type="protein sequence ID" value="BAD18513.1"/>
    <property type="status" value="ALT_SEQ"/>
    <property type="molecule type" value="mRNA"/>
</dbReference>
<dbReference type="EMBL" id="AK131410">
    <property type="protein sequence ID" value="BAD18557.1"/>
    <property type="molecule type" value="mRNA"/>
</dbReference>
<dbReference type="EMBL" id="CH471094">
    <property type="protein sequence ID" value="EAW96400.1"/>
    <property type="status" value="ALT_INIT"/>
    <property type="molecule type" value="Genomic_DNA"/>
</dbReference>
<dbReference type="EMBL" id="BC015624">
    <property type="protein sequence ID" value="AAH15624.1"/>
    <property type="status" value="ALT_INIT"/>
    <property type="molecule type" value="mRNA"/>
</dbReference>
<dbReference type="EMBL" id="BC022220">
    <property type="protein sequence ID" value="AAH22220.1"/>
    <property type="status" value="ALT_INIT"/>
    <property type="molecule type" value="mRNA"/>
</dbReference>
<dbReference type="EMBL" id="AB209384">
    <property type="protein sequence ID" value="BAD92621.1"/>
    <property type="molecule type" value="mRNA"/>
</dbReference>
<dbReference type="CCDS" id="CCDS44841.1">
    <molecule id="Q6ZN18-1"/>
</dbReference>
<dbReference type="CCDS" id="CCDS44842.1">
    <molecule id="Q6ZN18-2"/>
</dbReference>
<dbReference type="CCDS" id="CCDS58215.1">
    <molecule id="Q6ZN18-3"/>
</dbReference>
<dbReference type="RefSeq" id="NP_001107648.1">
    <molecule id="Q6ZN18-1"/>
    <property type="nucleotide sequence ID" value="NM_001114176.2"/>
</dbReference>
<dbReference type="RefSeq" id="NP_001253972.1">
    <molecule id="Q6ZN18-3"/>
    <property type="nucleotide sequence ID" value="NM_001267043.2"/>
</dbReference>
<dbReference type="RefSeq" id="NP_694939.2">
    <molecule id="Q6ZN18-2"/>
    <property type="nucleotide sequence ID" value="NM_153207.5"/>
</dbReference>
<dbReference type="PDB" id="5WAI">
    <property type="method" value="X-ray"/>
    <property type="resolution" value="2.90 A"/>
    <property type="chains" value="C/G=407-503"/>
</dbReference>
<dbReference type="PDB" id="5Y0U">
    <property type="method" value="NMR"/>
    <property type="chains" value="A=258-357"/>
</dbReference>
<dbReference type="PDB" id="5Y1U">
    <property type="method" value="X-ray"/>
    <property type="resolution" value="2.14 A"/>
    <property type="chains" value="C/D=379-390"/>
</dbReference>
<dbReference type="PDB" id="6C23">
    <property type="method" value="EM"/>
    <property type="resolution" value="3.90 A"/>
    <property type="chains" value="P=209-503"/>
</dbReference>
<dbReference type="PDB" id="6C24">
    <property type="method" value="EM"/>
    <property type="resolution" value="3.50 A"/>
    <property type="chains" value="P=209-503"/>
</dbReference>
<dbReference type="PDB" id="6WKR">
    <property type="method" value="EM"/>
    <property type="resolution" value="3.50 A"/>
    <property type="chains" value="P=209-503"/>
</dbReference>
<dbReference type="PDB" id="7KSO">
    <property type="method" value="EM"/>
    <property type="resolution" value="3.90 A"/>
    <property type="chains" value="E=209-503"/>
</dbReference>
<dbReference type="PDB" id="8EQV">
    <property type="method" value="EM"/>
    <property type="resolution" value="3.64 A"/>
    <property type="chains" value="C=1-517"/>
</dbReference>
<dbReference type="PDB" id="8FYH">
    <property type="method" value="EM"/>
    <property type="resolution" value="3.40 A"/>
    <property type="chains" value="F/L=1-517"/>
</dbReference>
<dbReference type="PDB" id="8T9G">
    <property type="method" value="EM"/>
    <property type="resolution" value="6.20 A"/>
    <property type="chains" value="M/Y=223-517"/>
</dbReference>
<dbReference type="PDB" id="8TAS">
    <property type="method" value="EM"/>
    <property type="resolution" value="4.10 A"/>
    <property type="chains" value="Y=224-517"/>
</dbReference>
<dbReference type="PDB" id="8TB9">
    <property type="method" value="EM"/>
    <property type="resolution" value="4.00 A"/>
    <property type="chains" value="Y=223-517"/>
</dbReference>
<dbReference type="PDB" id="8VMI">
    <property type="method" value="EM"/>
    <property type="resolution" value="3.10 A"/>
    <property type="chains" value="P=223-517"/>
</dbReference>
<dbReference type="PDB" id="8VML">
    <property type="method" value="EM"/>
    <property type="resolution" value="3.50 A"/>
    <property type="chains" value="P=223-517"/>
</dbReference>
<dbReference type="PDB" id="8VNV">
    <property type="method" value="EM"/>
    <property type="resolution" value="3.10 A"/>
    <property type="chains" value="P=225-503"/>
</dbReference>
<dbReference type="PDB" id="8VNZ">
    <property type="method" value="EM"/>
    <property type="resolution" value="3.50 A"/>
    <property type="chains" value="P=223-517"/>
</dbReference>
<dbReference type="PDB" id="9C8U">
    <property type="method" value="EM"/>
    <property type="resolution" value="3.10 A"/>
    <property type="chains" value="F=210-503"/>
</dbReference>
<dbReference type="PDB" id="9DCH">
    <property type="method" value="EM"/>
    <property type="resolution" value="3.40 A"/>
    <property type="chains" value="F/M=210-503"/>
</dbReference>
<dbReference type="PDBsum" id="5WAI"/>
<dbReference type="PDBsum" id="5Y0U"/>
<dbReference type="PDBsum" id="5Y1U"/>
<dbReference type="PDBsum" id="6C23"/>
<dbReference type="PDBsum" id="6C24"/>
<dbReference type="PDBsum" id="6WKR"/>
<dbReference type="PDBsum" id="7KSO"/>
<dbReference type="PDBsum" id="8EQV"/>
<dbReference type="PDBsum" id="8FYH"/>
<dbReference type="PDBsum" id="8T9G"/>
<dbReference type="PDBsum" id="8TAS"/>
<dbReference type="PDBsum" id="8TB9"/>
<dbReference type="PDBsum" id="8VMI"/>
<dbReference type="PDBsum" id="8VML"/>
<dbReference type="PDBsum" id="8VNV"/>
<dbReference type="PDBsum" id="8VNZ"/>
<dbReference type="PDBsum" id="9C8U"/>
<dbReference type="PDBsum" id="9DCH"/>
<dbReference type="EMDB" id="EMD-21707"/>
<dbReference type="EMDB" id="EMD-23021"/>
<dbReference type="EMDB" id="EMD-23022"/>
<dbReference type="EMDB" id="EMD-23103"/>
<dbReference type="EMDB" id="EMD-28547"/>
<dbReference type="EMDB" id="EMD-29578"/>
<dbReference type="EMDB" id="EMD-29647"/>
<dbReference type="EMDB" id="EMD-29656"/>
<dbReference type="EMDB" id="EMD-41110"/>
<dbReference type="EMDB" id="EMD-41141"/>
<dbReference type="EMDB" id="EMD-41146"/>
<dbReference type="EMDB" id="EMD-43357"/>
<dbReference type="EMDB" id="EMD-43359"/>
<dbReference type="EMDB" id="EMD-43361"/>
<dbReference type="EMDB" id="EMD-43362"/>
<dbReference type="EMDB" id="EMD-46722"/>
<dbReference type="EMDB" id="EMD-46726"/>
<dbReference type="EMDB" id="EMD-46751"/>
<dbReference type="EMDB" id="EMD-7334"/>
<dbReference type="EMDB" id="EMD-7335"/>
<dbReference type="SMR" id="Q6ZN18"/>
<dbReference type="BioGRID" id="125736">
    <property type="interactions" value="49"/>
</dbReference>
<dbReference type="ComplexPortal" id="CPX-2209">
    <property type="entry name" value="Polycomb repressive complex 2.2, EZH2-RBBP4 variant"/>
</dbReference>
<dbReference type="ComplexPortal" id="CPX-2212">
    <property type="entry name" value="Polycomb repressive complex 2.2, EZH1-RBBP7 variant"/>
</dbReference>
<dbReference type="ComplexPortal" id="CPX-2213">
    <property type="entry name" value="Polycomb repressive complex 2.2, EZH2-RBBP7 variant"/>
</dbReference>
<dbReference type="ComplexPortal" id="CPX-2330">
    <property type="entry name" value="Polycomb repressive complex 2.2, EZH1-RBBP4 variant"/>
</dbReference>
<dbReference type="CORUM" id="Q6ZN18"/>
<dbReference type="DIP" id="DIP-58581N"/>
<dbReference type="FunCoup" id="Q6ZN18">
    <property type="interactions" value="2047"/>
</dbReference>
<dbReference type="IntAct" id="Q6ZN18">
    <property type="interactions" value="33"/>
</dbReference>
<dbReference type="MINT" id="Q6ZN18"/>
<dbReference type="STRING" id="9606.ENSP00000381840"/>
<dbReference type="BindingDB" id="Q6ZN18"/>
<dbReference type="ChEMBL" id="CHEMBL3137287"/>
<dbReference type="GlyGen" id="Q6ZN18">
    <property type="glycosylation" value="1 site, 1 N-linked glycan (1 site)"/>
</dbReference>
<dbReference type="iPTMnet" id="Q6ZN18"/>
<dbReference type="PhosphoSitePlus" id="Q6ZN18"/>
<dbReference type="BioMuta" id="AEBP2"/>
<dbReference type="DMDM" id="190358163"/>
<dbReference type="jPOST" id="Q6ZN18"/>
<dbReference type="MassIVE" id="Q6ZN18"/>
<dbReference type="PaxDb" id="9606-ENSP00000381840"/>
<dbReference type="PeptideAtlas" id="Q6ZN18"/>
<dbReference type="ProteomicsDB" id="67961">
    <molecule id="Q6ZN18-1"/>
</dbReference>
<dbReference type="ProteomicsDB" id="67962">
    <molecule id="Q6ZN18-2"/>
</dbReference>
<dbReference type="ProteomicsDB" id="67963">
    <molecule id="Q6ZN18-3"/>
</dbReference>
<dbReference type="Pumba" id="Q6ZN18"/>
<dbReference type="Antibodypedia" id="23931">
    <property type="antibodies" value="227 antibodies from 26 providers"/>
</dbReference>
<dbReference type="DNASU" id="121536"/>
<dbReference type="Ensembl" id="ENST00000266508.14">
    <molecule id="Q6ZN18-2"/>
    <property type="protein sequence ID" value="ENSP00000266508.9"/>
    <property type="gene ID" value="ENSG00000139154.16"/>
</dbReference>
<dbReference type="Ensembl" id="ENST00000360995.8">
    <molecule id="Q6ZN18-3"/>
    <property type="protein sequence ID" value="ENSP00000354267.4"/>
    <property type="gene ID" value="ENSG00000139154.16"/>
</dbReference>
<dbReference type="Ensembl" id="ENST00000398864.7">
    <molecule id="Q6ZN18-1"/>
    <property type="protein sequence ID" value="ENSP00000381840.3"/>
    <property type="gene ID" value="ENSG00000139154.16"/>
</dbReference>
<dbReference type="GeneID" id="121536"/>
<dbReference type="KEGG" id="hsa:121536"/>
<dbReference type="MANE-Select" id="ENST00000266508.14">
    <molecule id="Q6ZN18-2"/>
    <property type="protein sequence ID" value="ENSP00000266508.9"/>
    <property type="RefSeq nucleotide sequence ID" value="NM_153207.5"/>
    <property type="RefSeq protein sequence ID" value="NP_694939.2"/>
</dbReference>
<dbReference type="UCSC" id="uc001ree.3">
    <molecule id="Q6ZN18-1"/>
    <property type="organism name" value="human"/>
</dbReference>
<dbReference type="AGR" id="HGNC:24051"/>
<dbReference type="CTD" id="121536"/>
<dbReference type="DisGeNET" id="121536"/>
<dbReference type="GeneCards" id="AEBP2"/>
<dbReference type="HGNC" id="HGNC:24051">
    <property type="gene designation" value="AEBP2"/>
</dbReference>
<dbReference type="HPA" id="ENSG00000139154">
    <property type="expression patterns" value="Low tissue specificity"/>
</dbReference>
<dbReference type="MIM" id="617934">
    <property type="type" value="gene"/>
</dbReference>
<dbReference type="neXtProt" id="NX_Q6ZN18"/>
<dbReference type="OpenTargets" id="ENSG00000139154"/>
<dbReference type="PharmGKB" id="PA134875401"/>
<dbReference type="VEuPathDB" id="HostDB:ENSG00000139154"/>
<dbReference type="eggNOG" id="KOG1721">
    <property type="taxonomic scope" value="Eukaryota"/>
</dbReference>
<dbReference type="GeneTree" id="ENSGT00510000048519"/>
<dbReference type="HOGENOM" id="CLU_029789_1_0_1"/>
<dbReference type="InParanoid" id="Q6ZN18"/>
<dbReference type="OMA" id="FAENICL"/>
<dbReference type="OrthoDB" id="9984614at2759"/>
<dbReference type="PAN-GO" id="Q6ZN18">
    <property type="GO annotations" value="2 GO annotations based on evolutionary models"/>
</dbReference>
<dbReference type="PhylomeDB" id="Q6ZN18"/>
<dbReference type="TreeFam" id="TF328864"/>
<dbReference type="PathwayCommons" id="Q6ZN18"/>
<dbReference type="Reactome" id="R-HSA-212300">
    <property type="pathway name" value="PRC2 methylates histones and DNA"/>
</dbReference>
<dbReference type="Reactome" id="R-HSA-3214841">
    <property type="pathway name" value="PKMTs methylate histone lysines"/>
</dbReference>
<dbReference type="SignaLink" id="Q6ZN18"/>
<dbReference type="SIGNOR" id="Q6ZN18"/>
<dbReference type="BioGRID-ORCS" id="121536">
    <property type="hits" value="28 hits in 1168 CRISPR screens"/>
</dbReference>
<dbReference type="CD-CODE" id="F701F3BC">
    <property type="entry name" value="PcG body"/>
</dbReference>
<dbReference type="ChiTaRS" id="AEBP2">
    <property type="organism name" value="human"/>
</dbReference>
<dbReference type="GenomeRNAi" id="121536"/>
<dbReference type="Pharos" id="Q6ZN18">
    <property type="development level" value="Tbio"/>
</dbReference>
<dbReference type="PRO" id="PR:Q6ZN18"/>
<dbReference type="Proteomes" id="UP000005640">
    <property type="component" value="Chromosome 12"/>
</dbReference>
<dbReference type="RNAct" id="Q6ZN18">
    <property type="molecule type" value="protein"/>
</dbReference>
<dbReference type="Bgee" id="ENSG00000139154">
    <property type="expression patterns" value="Expressed in calcaneal tendon and 188 other cell types or tissues"/>
</dbReference>
<dbReference type="ExpressionAtlas" id="Q6ZN18">
    <property type="expression patterns" value="baseline and differential"/>
</dbReference>
<dbReference type="GO" id="GO:0000785">
    <property type="term" value="C:chromatin"/>
    <property type="evidence" value="ECO:0000247"/>
    <property type="project" value="NTNU_SB"/>
</dbReference>
<dbReference type="GO" id="GO:0035098">
    <property type="term" value="C:ESC/E(Z) complex"/>
    <property type="evidence" value="ECO:0000314"/>
    <property type="project" value="UniProtKB"/>
</dbReference>
<dbReference type="GO" id="GO:0005654">
    <property type="term" value="C:nucleoplasm"/>
    <property type="evidence" value="ECO:0000314"/>
    <property type="project" value="HPA"/>
</dbReference>
<dbReference type="GO" id="GO:0003677">
    <property type="term" value="F:DNA binding"/>
    <property type="evidence" value="ECO:0007669"/>
    <property type="project" value="UniProtKB-KW"/>
</dbReference>
<dbReference type="GO" id="GO:0003712">
    <property type="term" value="F:transcription coregulator activity"/>
    <property type="evidence" value="ECO:0007669"/>
    <property type="project" value="Ensembl"/>
</dbReference>
<dbReference type="GO" id="GO:0008270">
    <property type="term" value="F:zinc ion binding"/>
    <property type="evidence" value="ECO:0007669"/>
    <property type="project" value="UniProtKB-KW"/>
</dbReference>
<dbReference type="GO" id="GO:0006325">
    <property type="term" value="P:chromatin organization"/>
    <property type="evidence" value="ECO:0007669"/>
    <property type="project" value="UniProtKB-KW"/>
</dbReference>
<dbReference type="GO" id="GO:0000122">
    <property type="term" value="P:negative regulation of transcription by RNA polymerase II"/>
    <property type="evidence" value="ECO:0007669"/>
    <property type="project" value="Ensembl"/>
</dbReference>
<dbReference type="GO" id="GO:0006357">
    <property type="term" value="P:regulation of transcription by RNA polymerase II"/>
    <property type="evidence" value="ECO:0000318"/>
    <property type="project" value="GO_Central"/>
</dbReference>
<dbReference type="FunFam" id="3.30.160.60:FF:000471">
    <property type="entry name" value="Zinc finger protein AEBP2"/>
    <property type="match status" value="1"/>
</dbReference>
<dbReference type="FunFam" id="3.30.160.60:FF:000323">
    <property type="entry name" value="zinc finger protein AEBP2"/>
    <property type="match status" value="1"/>
</dbReference>
<dbReference type="Gene3D" id="3.30.160.60">
    <property type="entry name" value="Classic Zinc Finger"/>
    <property type="match status" value="2"/>
</dbReference>
<dbReference type="InterPro" id="IPR052130">
    <property type="entry name" value="AEBP2/jing_C2H2-ZnF"/>
</dbReference>
<dbReference type="InterPro" id="IPR036236">
    <property type="entry name" value="Znf_C2H2_sf"/>
</dbReference>
<dbReference type="InterPro" id="IPR013087">
    <property type="entry name" value="Znf_C2H2_type"/>
</dbReference>
<dbReference type="PANTHER" id="PTHR46541">
    <property type="entry name" value="ZINC FINGER PROTEIN AEBP2"/>
    <property type="match status" value="1"/>
</dbReference>
<dbReference type="PANTHER" id="PTHR46541:SF1">
    <property type="entry name" value="ZINC FINGER PROTEIN AEBP2"/>
    <property type="match status" value="1"/>
</dbReference>
<dbReference type="SMART" id="SM00355">
    <property type="entry name" value="ZnF_C2H2"/>
    <property type="match status" value="3"/>
</dbReference>
<dbReference type="SUPFAM" id="SSF57667">
    <property type="entry name" value="beta-beta-alpha zinc fingers"/>
    <property type="match status" value="2"/>
</dbReference>
<dbReference type="PROSITE" id="PS00028">
    <property type="entry name" value="ZINC_FINGER_C2H2_1"/>
    <property type="match status" value="2"/>
</dbReference>
<dbReference type="PROSITE" id="PS50157">
    <property type="entry name" value="ZINC_FINGER_C2H2_2"/>
    <property type="match status" value="2"/>
</dbReference>
<reference key="1">
    <citation type="journal article" date="2004" name="Nat. Genet.">
        <title>Complete sequencing and characterization of 21,243 full-length human cDNAs.</title>
        <authorList>
            <person name="Ota T."/>
            <person name="Suzuki Y."/>
            <person name="Nishikawa T."/>
            <person name="Otsuki T."/>
            <person name="Sugiyama T."/>
            <person name="Irie R."/>
            <person name="Wakamatsu A."/>
            <person name="Hayashi K."/>
            <person name="Sato H."/>
            <person name="Nagai K."/>
            <person name="Kimura K."/>
            <person name="Makita H."/>
            <person name="Sekine M."/>
            <person name="Obayashi M."/>
            <person name="Nishi T."/>
            <person name="Shibahara T."/>
            <person name="Tanaka T."/>
            <person name="Ishii S."/>
            <person name="Yamamoto J."/>
            <person name="Saito K."/>
            <person name="Kawai Y."/>
            <person name="Isono Y."/>
            <person name="Nakamura Y."/>
            <person name="Nagahari K."/>
            <person name="Murakami K."/>
            <person name="Yasuda T."/>
            <person name="Iwayanagi T."/>
            <person name="Wagatsuma M."/>
            <person name="Shiratori A."/>
            <person name="Sudo H."/>
            <person name="Hosoiri T."/>
            <person name="Kaku Y."/>
            <person name="Kodaira H."/>
            <person name="Kondo H."/>
            <person name="Sugawara M."/>
            <person name="Takahashi M."/>
            <person name="Kanda K."/>
            <person name="Yokoi T."/>
            <person name="Furuya T."/>
            <person name="Kikkawa E."/>
            <person name="Omura Y."/>
            <person name="Abe K."/>
            <person name="Kamihara K."/>
            <person name="Katsuta N."/>
            <person name="Sato K."/>
            <person name="Tanikawa M."/>
            <person name="Yamazaki M."/>
            <person name="Ninomiya K."/>
            <person name="Ishibashi T."/>
            <person name="Yamashita H."/>
            <person name="Murakawa K."/>
            <person name="Fujimori K."/>
            <person name="Tanai H."/>
            <person name="Kimata M."/>
            <person name="Watanabe M."/>
            <person name="Hiraoka S."/>
            <person name="Chiba Y."/>
            <person name="Ishida S."/>
            <person name="Ono Y."/>
            <person name="Takiguchi S."/>
            <person name="Watanabe S."/>
            <person name="Yosida M."/>
            <person name="Hotuta T."/>
            <person name="Kusano J."/>
            <person name="Kanehori K."/>
            <person name="Takahashi-Fujii A."/>
            <person name="Hara H."/>
            <person name="Tanase T.-O."/>
            <person name="Nomura Y."/>
            <person name="Togiya S."/>
            <person name="Komai F."/>
            <person name="Hara R."/>
            <person name="Takeuchi K."/>
            <person name="Arita M."/>
            <person name="Imose N."/>
            <person name="Musashino K."/>
            <person name="Yuuki H."/>
            <person name="Oshima A."/>
            <person name="Sasaki N."/>
            <person name="Aotsuka S."/>
            <person name="Yoshikawa Y."/>
            <person name="Matsunawa H."/>
            <person name="Ichihara T."/>
            <person name="Shiohata N."/>
            <person name="Sano S."/>
            <person name="Moriya S."/>
            <person name="Momiyama H."/>
            <person name="Satoh N."/>
            <person name="Takami S."/>
            <person name="Terashima Y."/>
            <person name="Suzuki O."/>
            <person name="Nakagawa S."/>
            <person name="Senoh A."/>
            <person name="Mizoguchi H."/>
            <person name="Goto Y."/>
            <person name="Shimizu F."/>
            <person name="Wakebe H."/>
            <person name="Hishigaki H."/>
            <person name="Watanabe T."/>
            <person name="Sugiyama A."/>
            <person name="Takemoto M."/>
            <person name="Kawakami B."/>
            <person name="Yamazaki M."/>
            <person name="Watanabe K."/>
            <person name="Kumagai A."/>
            <person name="Itakura S."/>
            <person name="Fukuzumi Y."/>
            <person name="Fujimori Y."/>
            <person name="Komiyama M."/>
            <person name="Tashiro H."/>
            <person name="Tanigami A."/>
            <person name="Fujiwara T."/>
            <person name="Ono T."/>
            <person name="Yamada K."/>
            <person name="Fujii Y."/>
            <person name="Ozaki K."/>
            <person name="Hirao M."/>
            <person name="Ohmori Y."/>
            <person name="Kawabata A."/>
            <person name="Hikiji T."/>
            <person name="Kobatake N."/>
            <person name="Inagaki H."/>
            <person name="Ikema Y."/>
            <person name="Okamoto S."/>
            <person name="Okitani R."/>
            <person name="Kawakami T."/>
            <person name="Noguchi S."/>
            <person name="Itoh T."/>
            <person name="Shigeta K."/>
            <person name="Senba T."/>
            <person name="Matsumura K."/>
            <person name="Nakajima Y."/>
            <person name="Mizuno T."/>
            <person name="Morinaga M."/>
            <person name="Sasaki M."/>
            <person name="Togashi T."/>
            <person name="Oyama M."/>
            <person name="Hata H."/>
            <person name="Watanabe M."/>
            <person name="Komatsu T."/>
            <person name="Mizushima-Sugano J."/>
            <person name="Satoh T."/>
            <person name="Shirai Y."/>
            <person name="Takahashi Y."/>
            <person name="Nakagawa K."/>
            <person name="Okumura K."/>
            <person name="Nagase T."/>
            <person name="Nomura N."/>
            <person name="Kikuchi H."/>
            <person name="Masuho Y."/>
            <person name="Yamashita R."/>
            <person name="Nakai K."/>
            <person name="Yada T."/>
            <person name="Nakamura Y."/>
            <person name="Ohara O."/>
            <person name="Isogai T."/>
            <person name="Sugano S."/>
        </authorList>
    </citation>
    <scope>NUCLEOTIDE SEQUENCE [LARGE SCALE MRNA] (ISOFORMS 1 AND 3)</scope>
    <source>
        <tissue>Teratocarcinoma</tissue>
        <tissue>Uterus</tissue>
    </source>
</reference>
<reference key="2">
    <citation type="submission" date="2005-07" db="EMBL/GenBank/DDBJ databases">
        <authorList>
            <person name="Mural R.J."/>
            <person name="Istrail S."/>
            <person name="Sutton G.G."/>
            <person name="Florea L."/>
            <person name="Halpern A.L."/>
            <person name="Mobarry C.M."/>
            <person name="Lippert R."/>
            <person name="Walenz B."/>
            <person name="Shatkay H."/>
            <person name="Dew I."/>
            <person name="Miller J.R."/>
            <person name="Flanigan M.J."/>
            <person name="Edwards N.J."/>
            <person name="Bolanos R."/>
            <person name="Fasulo D."/>
            <person name="Halldorsson B.V."/>
            <person name="Hannenhalli S."/>
            <person name="Turner R."/>
            <person name="Yooseph S."/>
            <person name="Lu F."/>
            <person name="Nusskern D.R."/>
            <person name="Shue B.C."/>
            <person name="Zheng X.H."/>
            <person name="Zhong F."/>
            <person name="Delcher A.L."/>
            <person name="Huson D.H."/>
            <person name="Kravitz S.A."/>
            <person name="Mouchard L."/>
            <person name="Reinert K."/>
            <person name="Remington K.A."/>
            <person name="Clark A.G."/>
            <person name="Waterman M.S."/>
            <person name="Eichler E.E."/>
            <person name="Adams M.D."/>
            <person name="Hunkapiller M.W."/>
            <person name="Myers E.W."/>
            <person name="Venter J.C."/>
        </authorList>
    </citation>
    <scope>NUCLEOTIDE SEQUENCE [LARGE SCALE GENOMIC DNA]</scope>
</reference>
<reference key="3">
    <citation type="journal article" date="2004" name="Genome Res.">
        <title>The status, quality, and expansion of the NIH full-length cDNA project: the Mammalian Gene Collection (MGC).</title>
        <authorList>
            <consortium name="The MGC Project Team"/>
        </authorList>
    </citation>
    <scope>NUCLEOTIDE SEQUENCE [LARGE SCALE MRNA] (ISOFORM 2)</scope>
    <source>
        <tissue>Eye</tissue>
        <tissue>Uterus</tissue>
    </source>
</reference>
<reference key="4">
    <citation type="submission" date="2005-03" db="EMBL/GenBank/DDBJ databases">
        <authorList>
            <person name="Totoki Y."/>
            <person name="Toyoda A."/>
            <person name="Takeda T."/>
            <person name="Sakaki Y."/>
            <person name="Tanaka A."/>
            <person name="Yokoyama S."/>
            <person name="Ohara O."/>
            <person name="Nagase T."/>
            <person name="Kikuno R.F."/>
        </authorList>
    </citation>
    <scope>NUCLEOTIDE SEQUENCE [LARGE SCALE MRNA] OF 61-517 (ISOFORM 1)</scope>
    <source>
        <tissue>Brain</tissue>
    </source>
</reference>
<reference key="5">
    <citation type="journal article" date="2002" name="Science">
        <title>Role of histone H3 lysine 27 methylation in Polycomb-group silencing.</title>
        <authorList>
            <person name="Cao R."/>
            <person name="Wang L."/>
            <person name="Wang H."/>
            <person name="Xia L."/>
            <person name="Erdjument-Bromage H."/>
            <person name="Tempst P."/>
            <person name="Jones R.S."/>
            <person name="Zhang Y."/>
        </authorList>
    </citation>
    <scope>IDENTIFICATION BY MASS SPECTROMETRY</scope>
    <scope>INTERACTION WITH EED; EZH2; RBBP4; RBBP7 AND SUZ12</scope>
</reference>
<reference key="6">
    <citation type="journal article" date="2004" name="Mol. Cell">
        <title>SUZ12 is required for both the histone methyltransferase activity and the silencing function of the EED-EZH2 complex.</title>
        <authorList>
            <person name="Cao R."/>
            <person name="Zhang Y."/>
        </authorList>
    </citation>
    <scope>FUNCTION</scope>
    <scope>SELF-ASSOCIATION</scope>
    <scope>INTERACTION WITH EED; EZH2; RBBP4 AND SUZ12</scope>
</reference>
<reference key="7">
    <citation type="journal article" date="2006" name="Cell">
        <title>Global, in vivo, and site-specific phosphorylation dynamics in signaling networks.</title>
        <authorList>
            <person name="Olsen J.V."/>
            <person name="Blagoev B."/>
            <person name="Gnad F."/>
            <person name="Macek B."/>
            <person name="Kumar C."/>
            <person name="Mortensen P."/>
            <person name="Mann M."/>
        </authorList>
    </citation>
    <scope>PHOSPHORYLATION [LARGE SCALE ANALYSIS] AT SER-18 AND SER-24</scope>
    <scope>IDENTIFICATION BY MASS SPECTROMETRY [LARGE SCALE ANALYSIS]</scope>
    <source>
        <tissue>Cervix carcinoma</tissue>
    </source>
</reference>
<reference key="8">
    <citation type="journal article" date="2007" name="Science">
        <title>ATM and ATR substrate analysis reveals extensive protein networks responsive to DNA damage.</title>
        <authorList>
            <person name="Matsuoka S."/>
            <person name="Ballif B.A."/>
            <person name="Smogorzewska A."/>
            <person name="McDonald E.R. III"/>
            <person name="Hurov K.E."/>
            <person name="Luo J."/>
            <person name="Bakalarski C.E."/>
            <person name="Zhao Z."/>
            <person name="Solimini N."/>
            <person name="Lerenthal Y."/>
            <person name="Shiloh Y."/>
            <person name="Gygi S.P."/>
            <person name="Elledge S.J."/>
        </authorList>
    </citation>
    <scope>IDENTIFICATION BY MASS SPECTROMETRY [LARGE SCALE ANALYSIS]</scope>
    <source>
        <tissue>Embryonic kidney</tissue>
    </source>
</reference>
<reference key="9">
    <citation type="journal article" date="2008" name="Proc. Natl. Acad. Sci. U.S.A.">
        <title>A quantitative atlas of mitotic phosphorylation.</title>
        <authorList>
            <person name="Dephoure N."/>
            <person name="Zhou C."/>
            <person name="Villen J."/>
            <person name="Beausoleil S.A."/>
            <person name="Bakalarski C.E."/>
            <person name="Elledge S.J."/>
            <person name="Gygi S.P."/>
        </authorList>
    </citation>
    <scope>PHOSPHORYLATION [LARGE SCALE ANALYSIS] AT SER-206; SER-210 AND SER-211</scope>
    <scope>IDENTIFICATION BY MASS SPECTROMETRY [LARGE SCALE ANALYSIS]</scope>
    <source>
        <tissue>Cervix carcinoma</tissue>
    </source>
</reference>
<reference key="10">
    <citation type="journal article" date="2009" name="Anal. Chem.">
        <title>Lys-N and trypsin cover complementary parts of the phosphoproteome in a refined SCX-based approach.</title>
        <authorList>
            <person name="Gauci S."/>
            <person name="Helbig A.O."/>
            <person name="Slijper M."/>
            <person name="Krijgsveld J."/>
            <person name="Heck A.J."/>
            <person name="Mohammed S."/>
        </authorList>
    </citation>
    <scope>ACETYLATION [LARGE SCALE ANALYSIS] AT ALA-2</scope>
    <scope>CLEAVAGE OF INITIATOR METHIONINE [LARGE SCALE ANALYSIS]</scope>
    <scope>IDENTIFICATION BY MASS SPECTROMETRY [LARGE SCALE ANALYSIS]</scope>
</reference>
<reference key="11">
    <citation type="journal article" date="2009" name="Sci. Signal.">
        <title>Quantitative phosphoproteomic analysis of T cell receptor signaling reveals system-wide modulation of protein-protein interactions.</title>
        <authorList>
            <person name="Mayya V."/>
            <person name="Lundgren D.H."/>
            <person name="Hwang S.-I."/>
            <person name="Rezaul K."/>
            <person name="Wu L."/>
            <person name="Eng J.K."/>
            <person name="Rodionov V."/>
            <person name="Han D.K."/>
        </authorList>
    </citation>
    <scope>PHOSPHORYLATION [LARGE SCALE ANALYSIS] AT SER-206</scope>
    <scope>IDENTIFICATION BY MASS SPECTROMETRY [LARGE SCALE ANALYSIS]</scope>
    <source>
        <tissue>Leukemic T-cell</tissue>
    </source>
</reference>
<reference key="12">
    <citation type="journal article" date="2010" name="Sci. Signal.">
        <title>Quantitative phosphoproteomics reveals widespread full phosphorylation site occupancy during mitosis.</title>
        <authorList>
            <person name="Olsen J.V."/>
            <person name="Vermeulen M."/>
            <person name="Santamaria A."/>
            <person name="Kumar C."/>
            <person name="Miller M.L."/>
            <person name="Jensen L.J."/>
            <person name="Gnad F."/>
            <person name="Cox J."/>
            <person name="Jensen T.S."/>
            <person name="Nigg E.A."/>
            <person name="Brunak S."/>
            <person name="Mann M."/>
        </authorList>
    </citation>
    <scope>ACETYLATION [LARGE SCALE ANALYSIS] AT ALA-2</scope>
    <scope>PHOSPHORYLATION [LARGE SCALE ANALYSIS] AT SER-18; SER-24 AND SER-390</scope>
    <scope>CLEAVAGE OF INITIATOR METHIONINE [LARGE SCALE ANALYSIS]</scope>
    <scope>IDENTIFICATION BY MASS SPECTROMETRY [LARGE SCALE ANALYSIS]</scope>
    <source>
        <tissue>Cervix carcinoma</tissue>
    </source>
</reference>
<reference key="13">
    <citation type="journal article" date="2011" name="Sci. Signal.">
        <title>System-wide temporal characterization of the proteome and phosphoproteome of human embryonic stem cell differentiation.</title>
        <authorList>
            <person name="Rigbolt K.T."/>
            <person name="Prokhorova T.A."/>
            <person name="Akimov V."/>
            <person name="Henningsen J."/>
            <person name="Johansen P.T."/>
            <person name="Kratchmarova I."/>
            <person name="Kassem M."/>
            <person name="Mann M."/>
            <person name="Olsen J.V."/>
            <person name="Blagoev B."/>
        </authorList>
    </citation>
    <scope>PHOSPHORYLATION [LARGE SCALE ANALYSIS] AT SER-206 AND SER-390</scope>
    <scope>IDENTIFICATION BY MASS SPECTROMETRY [LARGE SCALE ANALYSIS]</scope>
</reference>
<reference key="14">
    <citation type="journal article" date="2012" name="Proc. Natl. Acad. Sci. U.S.A.">
        <title>N-terminal acetylome analyses and functional insights of the N-terminal acetyltransferase NatB.</title>
        <authorList>
            <person name="Van Damme P."/>
            <person name="Lasa M."/>
            <person name="Polevoda B."/>
            <person name="Gazquez C."/>
            <person name="Elosegui-Artola A."/>
            <person name="Kim D.S."/>
            <person name="De Juan-Pardo E."/>
            <person name="Demeyer K."/>
            <person name="Hole K."/>
            <person name="Larrea E."/>
            <person name="Timmerman E."/>
            <person name="Prieto J."/>
            <person name="Arnesen T."/>
            <person name="Sherman F."/>
            <person name="Gevaert K."/>
            <person name="Aldabe R."/>
        </authorList>
    </citation>
    <scope>ACETYLATION [LARGE SCALE ANALYSIS] AT ALA-2</scope>
    <scope>CLEAVAGE OF INITIATOR METHIONINE [LARGE SCALE ANALYSIS]</scope>
    <scope>IDENTIFICATION BY MASS SPECTROMETRY [LARGE SCALE ANALYSIS]</scope>
</reference>
<reference key="15">
    <citation type="journal article" date="2013" name="J. Proteome Res.">
        <title>Toward a comprehensive characterization of a human cancer cell phosphoproteome.</title>
        <authorList>
            <person name="Zhou H."/>
            <person name="Di Palma S."/>
            <person name="Preisinger C."/>
            <person name="Peng M."/>
            <person name="Polat A.N."/>
            <person name="Heck A.J."/>
            <person name="Mohammed S."/>
        </authorList>
    </citation>
    <scope>PHOSPHORYLATION [LARGE SCALE ANALYSIS] AT SER-141 AND SER-206</scope>
    <scope>IDENTIFICATION BY MASS SPECTROMETRY [LARGE SCALE ANALYSIS]</scope>
    <source>
        <tissue>Cervix carcinoma</tissue>
        <tissue>Erythroleukemia</tissue>
    </source>
</reference>
<reference evidence="9" key="16">
    <citation type="journal article" date="2020" name="Mol. Cell">
        <title>A Dimeric Structural Scaffold for PRC2-PCL Targeting to CpG Island Chromatin.</title>
        <authorList>
            <person name="Chen S."/>
            <person name="Jiao L."/>
            <person name="Liu X."/>
            <person name="Yang X."/>
            <person name="Liu X."/>
        </authorList>
    </citation>
    <scope>FUNCTION</scope>
    <scope>ASSOCIATION WITH THE PRC2 COMPLEX</scope>
</reference>
<reference evidence="10" key="17">
    <citation type="journal article" date="2018" name="Mol. Cell">
        <title>Unique Structural Platforms of Suz12 Dictate Distinct Classes of PRC2 for Chromatin Binding.</title>
        <authorList>
            <person name="Chen S."/>
            <person name="Jiao L."/>
            <person name="Shubbar M."/>
            <person name="Yang X."/>
            <person name="Liu X."/>
        </authorList>
    </citation>
    <scope>X-RAY CRYSTALLOGRAPHY (2.90 ANGSTROMS) OF 407-503 IN COMPLEX WITH SUZ12; RBBP4 AND JARID2</scope>
    <scope>FUNCTION</scope>
    <scope>ASSOCIATION WITH THE PRC2 COMPLEX</scope>
    <scope>INTERACTION WITH SUZ12</scope>
    <scope>SUBCELLULAR LOCATION</scope>
</reference>
<protein>
    <recommendedName>
        <fullName>Zinc finger protein AEBP2</fullName>
    </recommendedName>
    <alternativeName>
        <fullName>Adipocyte enhancer-binding protein 2</fullName>
        <shortName>AE-binding protein 2</shortName>
    </alternativeName>
</protein>
<comment type="function">
    <text evidence="4 5 6">Acts as an accessory subunit for the core Polycomb repressive complex 2 (PRC2), which mediates histone H3K27 (H3K27me3) trimethylation on chromatin leading to transcriptional repression of the affected target gene (PubMed:15225548, PubMed:29499137, PubMed:31959557). Plays a role in nucleosome localization of the PRC2 complex (PubMed:29499137).</text>
</comment>
<comment type="subunit">
    <text evidence="3 4 5 6">Self-associates (PubMed:15225548). Associates with the PRC2 complex, which consists of the core components EED, EZH1 or EZH2, SUZ12, and RBBP4, and various combinations of accessory subunits including AEBP2, JARID2, PHF19, MTF2 and EPOP (PubMed:12351676, PubMed:15225548, PubMed:29499137, PubMed:31959557). Found in a monomeric PRC2.2 (class 2) complex consisting of at least SUZ12, RBBP4, AEBP2 and JARID2 (PubMed:29499137). Within the PRC2 complex, interacts directly with SUZ12; competes with PHF19 for SUZ12 binding (PubMed:12351676, PubMed:29499137). Interacts with EED, EZH2, and RBBP4 (PubMed:12351676, PubMed:15225548). May also interact with RBBP7 (PubMed:12351676).</text>
</comment>
<comment type="interaction">
    <interactant intactId="EBI-10255023">
        <id>Q6ZN18-2</id>
    </interactant>
    <interactant intactId="EBI-2549423">
        <id>Q6NT76</id>
        <label>HMBOX1</label>
    </interactant>
    <organismsDiffer>false</organismsDiffer>
    <experiments>6</experiments>
</comment>
<comment type="interaction">
    <interactant intactId="EBI-10255023">
        <id>Q6ZN18-2</id>
    </interactant>
    <interactant intactId="EBI-10171774">
        <id>P60410</id>
        <label>KRTAP10-8</label>
    </interactant>
    <organismsDiffer>false</organismsDiffer>
    <experiments>3</experiments>
</comment>
<comment type="interaction">
    <interactant intactId="EBI-10255023">
        <id>Q6ZN18-2</id>
    </interactant>
    <interactant intactId="EBI-740738">
        <id>O95751</id>
        <label>LDOC1</label>
    </interactant>
    <organismsDiffer>false</organismsDiffer>
    <experiments>3</experiments>
</comment>
<comment type="interaction">
    <interactant intactId="EBI-10255023">
        <id>Q6ZN18-2</id>
    </interactant>
    <interactant intactId="EBI-724076">
        <id>Q99750</id>
        <label>MDFI</label>
    </interactant>
    <organismsDiffer>false</organismsDiffer>
    <experiments>3</experiments>
</comment>
<comment type="interaction">
    <interactant intactId="EBI-10255023">
        <id>Q6ZN18-2</id>
    </interactant>
    <interactant intactId="EBI-79165">
        <id>Q9NRD5</id>
        <label>PICK1</label>
    </interactant>
    <organismsDiffer>false</organismsDiffer>
    <experiments>3</experiments>
</comment>
<comment type="interaction">
    <interactant intactId="EBI-10255023">
        <id>Q6ZN18-2</id>
    </interactant>
    <interactant intactId="EBI-947459">
        <id>Q9H2G4</id>
        <label>TSPYL2</label>
    </interactant>
    <organismsDiffer>false</organismsDiffer>
    <experiments>3</experiments>
</comment>
<comment type="interaction">
    <interactant intactId="EBI-10255023">
        <id>Q6ZN18-2</id>
    </interactant>
    <interactant intactId="EBI-347633">
        <id>Q9H9D4</id>
        <label>ZNF408</label>
    </interactant>
    <organismsDiffer>false</organismsDiffer>
    <experiments>3</experiments>
</comment>
<comment type="subcellular location">
    <subcellularLocation>
        <location evidence="5">Nucleus</location>
    </subcellularLocation>
    <text evidence="5">Localizes to chromatin as part of the PRC2 complex.</text>
</comment>
<comment type="alternative products">
    <event type="alternative splicing"/>
    <isoform>
        <id>Q6ZN18-1</id>
        <name>1</name>
        <sequence type="displayed"/>
    </isoform>
    <isoform>
        <id>Q6ZN18-2</id>
        <name>2</name>
        <sequence type="described" ref="VSP_034359"/>
    </isoform>
    <isoform>
        <id>Q6ZN18-3</id>
        <name>3</name>
        <sequence type="described" ref="VSP_034357 VSP_034358"/>
    </isoform>
</comment>
<comment type="similarity">
    <text evidence="9">Belongs to the AEBP2/jing C2H2-type zinc-finger family.</text>
</comment>
<comment type="sequence caution" evidence="9">
    <conflict type="erroneous initiation">
        <sequence resource="EMBL-CDS" id="AAH15624"/>
    </conflict>
</comment>
<comment type="sequence caution" evidence="9">
    <conflict type="erroneous initiation">
        <sequence resource="EMBL-CDS" id="AAH22220"/>
    </conflict>
</comment>
<comment type="sequence caution" evidence="9">
    <conflict type="erroneous termination">
        <sequence resource="EMBL-CDS" id="BAD18513"/>
    </conflict>
    <text>Truncated C-terminus.</text>
</comment>
<comment type="sequence caution" evidence="9">
    <conflict type="erroneous initiation">
        <sequence resource="EMBL-CDS" id="EAW96400"/>
    </conflict>
</comment>